<name>ACCD_METI4</name>
<protein>
    <recommendedName>
        <fullName evidence="1">Acetyl-coenzyme A carboxylase carboxyl transferase subunit beta</fullName>
        <shortName evidence="1">ACCase subunit beta</shortName>
        <shortName evidence="1">Acetyl-CoA carboxylase carboxyltransferase subunit beta</shortName>
        <ecNumber evidence="1">2.1.3.15</ecNumber>
    </recommendedName>
</protein>
<feature type="chain" id="PRO_0000389792" description="Acetyl-coenzyme A carboxylase carboxyl transferase subunit beta">
    <location>
        <begin position="1"/>
        <end position="277"/>
    </location>
</feature>
<feature type="domain" description="CoA carboxyltransferase N-terminal" evidence="2">
    <location>
        <begin position="22"/>
        <end position="277"/>
    </location>
</feature>
<feature type="zinc finger region" description="C4-type" evidence="1">
    <location>
        <begin position="26"/>
        <end position="48"/>
    </location>
</feature>
<feature type="binding site" evidence="1">
    <location>
        <position position="26"/>
    </location>
    <ligand>
        <name>Zn(2+)</name>
        <dbReference type="ChEBI" id="CHEBI:29105"/>
    </ligand>
</feature>
<feature type="binding site" evidence="1">
    <location>
        <position position="29"/>
    </location>
    <ligand>
        <name>Zn(2+)</name>
        <dbReference type="ChEBI" id="CHEBI:29105"/>
    </ligand>
</feature>
<feature type="binding site" evidence="1">
    <location>
        <position position="45"/>
    </location>
    <ligand>
        <name>Zn(2+)</name>
        <dbReference type="ChEBI" id="CHEBI:29105"/>
    </ligand>
</feature>
<feature type="binding site" evidence="1">
    <location>
        <position position="48"/>
    </location>
    <ligand>
        <name>Zn(2+)</name>
        <dbReference type="ChEBI" id="CHEBI:29105"/>
    </ligand>
</feature>
<organism>
    <name type="scientific">Methylacidiphilum infernorum (isolate V4)</name>
    <name type="common">Methylokorus infernorum (strain V4)</name>
    <dbReference type="NCBI Taxonomy" id="481448"/>
    <lineage>
        <taxon>Bacteria</taxon>
        <taxon>Pseudomonadati</taxon>
        <taxon>Verrucomicrobiota</taxon>
        <taxon>Methylacidiphilae</taxon>
        <taxon>Methylacidiphilales</taxon>
        <taxon>Methylacidiphilaceae</taxon>
        <taxon>Methylacidiphilum (ex Ratnadevi et al. 2023)</taxon>
    </lineage>
</organism>
<keyword id="KW-0067">ATP-binding</keyword>
<keyword id="KW-0963">Cytoplasm</keyword>
<keyword id="KW-0275">Fatty acid biosynthesis</keyword>
<keyword id="KW-0276">Fatty acid metabolism</keyword>
<keyword id="KW-0444">Lipid biosynthesis</keyword>
<keyword id="KW-0443">Lipid metabolism</keyword>
<keyword id="KW-0479">Metal-binding</keyword>
<keyword id="KW-0547">Nucleotide-binding</keyword>
<keyword id="KW-0808">Transferase</keyword>
<keyword id="KW-0862">Zinc</keyword>
<keyword id="KW-0863">Zinc-finger</keyword>
<reference key="1">
    <citation type="journal article" date="2008" name="Biol. Direct">
        <title>Complete genome sequence of the extremely acidophilic methanotroph isolate V4, Methylacidiphilum infernorum, a representative of the bacterial phylum Verrucomicrobia.</title>
        <authorList>
            <person name="Hou S."/>
            <person name="Makarova K.S."/>
            <person name="Saw J.H."/>
            <person name="Senin P."/>
            <person name="Ly B.V."/>
            <person name="Zhou Z."/>
            <person name="Ren Y."/>
            <person name="Wang J."/>
            <person name="Galperin M.Y."/>
            <person name="Omelchenko M.V."/>
            <person name="Wolf Y.I."/>
            <person name="Yutin N."/>
            <person name="Koonin E.V."/>
            <person name="Stott M.B."/>
            <person name="Mountain B.W."/>
            <person name="Crowe M.A."/>
            <person name="Smirnova A.V."/>
            <person name="Dunfield P.F."/>
            <person name="Feng L."/>
            <person name="Wang L."/>
            <person name="Alam M."/>
        </authorList>
    </citation>
    <scope>NUCLEOTIDE SEQUENCE [LARGE SCALE GENOMIC DNA]</scope>
    <source>
        <strain>Isolate V4</strain>
    </source>
</reference>
<proteinExistence type="inferred from homology"/>
<sequence>MMSKDKPQIPSGEKMLDIPEGLWTKCPGCNRFLYTKELELNQSVCHYCQHHFPLKAPERIACITDPGSFIECEKHLHSVDILGFNGEKSYQERLDYYRNKTALDEAVVCGSCTIGSIPVFLCVMDFGFLGGSMGSVVGEKITRMIEKSLSAKTPLLIISASGGARMYEGMFSLMQMAKTAAALQRLSQAHVPYISLLTNPTMAGVIASFASLGDVILAEPKAMIGFAGSRVIKETTQQELPPGFQTAEFLLEKGLIDKIVHRKELRSTLKQLLYFLT</sequence>
<accession>B3DWQ9</accession>
<evidence type="ECO:0000255" key="1">
    <source>
        <dbReference type="HAMAP-Rule" id="MF_01395"/>
    </source>
</evidence>
<evidence type="ECO:0000255" key="2">
    <source>
        <dbReference type="PROSITE-ProRule" id="PRU01136"/>
    </source>
</evidence>
<gene>
    <name evidence="1" type="primary">accD</name>
    <name type="ordered locus">Minf_1668</name>
</gene>
<comment type="function">
    <text evidence="1">Component of the acetyl coenzyme A carboxylase (ACC) complex. Biotin carboxylase (BC) catalyzes the carboxylation of biotin on its carrier protein (BCCP) and then the CO(2) group is transferred by the transcarboxylase to acetyl-CoA to form malonyl-CoA.</text>
</comment>
<comment type="catalytic activity">
    <reaction evidence="1">
        <text>N(6)-carboxybiotinyl-L-lysyl-[protein] + acetyl-CoA = N(6)-biotinyl-L-lysyl-[protein] + malonyl-CoA</text>
        <dbReference type="Rhea" id="RHEA:54728"/>
        <dbReference type="Rhea" id="RHEA-COMP:10505"/>
        <dbReference type="Rhea" id="RHEA-COMP:10506"/>
        <dbReference type="ChEBI" id="CHEBI:57288"/>
        <dbReference type="ChEBI" id="CHEBI:57384"/>
        <dbReference type="ChEBI" id="CHEBI:83144"/>
        <dbReference type="ChEBI" id="CHEBI:83145"/>
        <dbReference type="EC" id="2.1.3.15"/>
    </reaction>
</comment>
<comment type="cofactor">
    <cofactor evidence="1">
        <name>Zn(2+)</name>
        <dbReference type="ChEBI" id="CHEBI:29105"/>
    </cofactor>
    <text evidence="1">Binds 1 zinc ion per subunit.</text>
</comment>
<comment type="pathway">
    <text evidence="1">Lipid metabolism; malonyl-CoA biosynthesis; malonyl-CoA from acetyl-CoA: step 1/1.</text>
</comment>
<comment type="subunit">
    <text evidence="1">Acetyl-CoA carboxylase is a heterohexamer composed of biotin carboxyl carrier protein (AccB), biotin carboxylase (AccC) and two subunits each of ACCase subunit alpha (AccA) and ACCase subunit beta (AccD).</text>
</comment>
<comment type="subcellular location">
    <subcellularLocation>
        <location evidence="1">Cytoplasm</location>
    </subcellularLocation>
</comment>
<comment type="similarity">
    <text evidence="1">Belongs to the AccD/PCCB family.</text>
</comment>
<dbReference type="EC" id="2.1.3.15" evidence="1"/>
<dbReference type="EMBL" id="CP000975">
    <property type="protein sequence ID" value="ACD83722.1"/>
    <property type="molecule type" value="Genomic_DNA"/>
</dbReference>
<dbReference type="RefSeq" id="WP_012464004.1">
    <property type="nucleotide sequence ID" value="NC_010794.1"/>
</dbReference>
<dbReference type="SMR" id="B3DWQ9"/>
<dbReference type="STRING" id="481448.Minf_1668"/>
<dbReference type="KEGG" id="min:Minf_1668"/>
<dbReference type="eggNOG" id="COG0777">
    <property type="taxonomic scope" value="Bacteria"/>
</dbReference>
<dbReference type="HOGENOM" id="CLU_015486_1_0_0"/>
<dbReference type="OrthoDB" id="9772975at2"/>
<dbReference type="UniPathway" id="UPA00655">
    <property type="reaction ID" value="UER00711"/>
</dbReference>
<dbReference type="Proteomes" id="UP000009149">
    <property type="component" value="Chromosome"/>
</dbReference>
<dbReference type="GO" id="GO:0009317">
    <property type="term" value="C:acetyl-CoA carboxylase complex"/>
    <property type="evidence" value="ECO:0007669"/>
    <property type="project" value="InterPro"/>
</dbReference>
<dbReference type="GO" id="GO:0003989">
    <property type="term" value="F:acetyl-CoA carboxylase activity"/>
    <property type="evidence" value="ECO:0007669"/>
    <property type="project" value="InterPro"/>
</dbReference>
<dbReference type="GO" id="GO:0005524">
    <property type="term" value="F:ATP binding"/>
    <property type="evidence" value="ECO:0007669"/>
    <property type="project" value="UniProtKB-KW"/>
</dbReference>
<dbReference type="GO" id="GO:0016743">
    <property type="term" value="F:carboxyl- or carbamoyltransferase activity"/>
    <property type="evidence" value="ECO:0007669"/>
    <property type="project" value="UniProtKB-UniRule"/>
</dbReference>
<dbReference type="GO" id="GO:0008270">
    <property type="term" value="F:zinc ion binding"/>
    <property type="evidence" value="ECO:0007669"/>
    <property type="project" value="UniProtKB-UniRule"/>
</dbReference>
<dbReference type="GO" id="GO:0006633">
    <property type="term" value="P:fatty acid biosynthetic process"/>
    <property type="evidence" value="ECO:0007669"/>
    <property type="project" value="UniProtKB-KW"/>
</dbReference>
<dbReference type="GO" id="GO:2001295">
    <property type="term" value="P:malonyl-CoA biosynthetic process"/>
    <property type="evidence" value="ECO:0007669"/>
    <property type="project" value="UniProtKB-UniRule"/>
</dbReference>
<dbReference type="Gene3D" id="3.90.226.10">
    <property type="entry name" value="2-enoyl-CoA Hydratase, Chain A, domain 1"/>
    <property type="match status" value="1"/>
</dbReference>
<dbReference type="HAMAP" id="MF_01395">
    <property type="entry name" value="AcetylCoA_CT_beta"/>
    <property type="match status" value="1"/>
</dbReference>
<dbReference type="InterPro" id="IPR034733">
    <property type="entry name" value="AcCoA_carboxyl_beta"/>
</dbReference>
<dbReference type="InterPro" id="IPR000438">
    <property type="entry name" value="Acetyl_CoA_COase_Trfase_b_su"/>
</dbReference>
<dbReference type="InterPro" id="IPR029045">
    <property type="entry name" value="ClpP/crotonase-like_dom_sf"/>
</dbReference>
<dbReference type="InterPro" id="IPR011762">
    <property type="entry name" value="COA_CT_N"/>
</dbReference>
<dbReference type="InterPro" id="IPR041010">
    <property type="entry name" value="Znf-ACC"/>
</dbReference>
<dbReference type="NCBIfam" id="TIGR00515">
    <property type="entry name" value="accD"/>
    <property type="match status" value="1"/>
</dbReference>
<dbReference type="PANTHER" id="PTHR42995">
    <property type="entry name" value="ACETYL-COENZYME A CARBOXYLASE CARBOXYL TRANSFERASE SUBUNIT BETA, CHLOROPLASTIC"/>
    <property type="match status" value="1"/>
</dbReference>
<dbReference type="PANTHER" id="PTHR42995:SF5">
    <property type="entry name" value="ACETYL-COENZYME A CARBOXYLASE CARBOXYL TRANSFERASE SUBUNIT BETA, CHLOROPLASTIC"/>
    <property type="match status" value="1"/>
</dbReference>
<dbReference type="Pfam" id="PF01039">
    <property type="entry name" value="Carboxyl_trans"/>
    <property type="match status" value="1"/>
</dbReference>
<dbReference type="Pfam" id="PF17848">
    <property type="entry name" value="Zn_ribbon_ACC"/>
    <property type="match status" value="1"/>
</dbReference>
<dbReference type="PRINTS" id="PR01070">
    <property type="entry name" value="ACCCTRFRASEB"/>
</dbReference>
<dbReference type="SUPFAM" id="SSF52096">
    <property type="entry name" value="ClpP/crotonase"/>
    <property type="match status" value="1"/>
</dbReference>
<dbReference type="PROSITE" id="PS50980">
    <property type="entry name" value="COA_CT_NTER"/>
    <property type="match status" value="1"/>
</dbReference>